<proteinExistence type="inferred from homology"/>
<gene>
    <name type="primary">osbF</name>
    <name type="ORF">DDB_G0276427</name>
</gene>
<accession>Q86HV4</accession>
<accession>Q551J4</accession>
<sequence length="439" mass="49590">MSAKVASNKEAPLTEDSVSDLSSDGVEAEGVDQTENSGADAMIDSEPATEAGVMKQAFGFIKNHLKVGADMTKLPIPATFVQPISFLTAIQQQSAIFSHLLTSAPYIKEDDQRFLQVLKYHLTWPKMYFPKNPLNPILGEVYECQVQHTDEKTNEVIQGDITHFTAEQISHHPPISCFNFYNDKHKIKFDSKQQITPVFKGKCIRVNMDVKTCITLEREGGVTETYFNDKFTEGYLRLLRWKFEFTGKYNFVCPETGYSAVINFKDKPIIGGKWHDLQIIVSKGTEPIYDIHGTHVDILTITNLKDKTSGVFINYNTMRSEPVIEEPMEQLKENASQKVWKGVAEGFAKKDSRKAGLEKQRIEDLQRKKAKVNLAKDPNFIHKPHYFIHNPNLPADCVKPDYIFKKPVESSTPNLSKVDSSAKIENSIPVDNSIPQTTN</sequence>
<evidence type="ECO:0000256" key="1">
    <source>
        <dbReference type="SAM" id="MobiDB-lite"/>
    </source>
</evidence>
<evidence type="ECO:0000305" key="2"/>
<feature type="chain" id="PRO_0000328474" description="Oxysterol-binding protein 6">
    <location>
        <begin position="1"/>
        <end position="439"/>
    </location>
</feature>
<feature type="region of interest" description="Disordered" evidence="1">
    <location>
        <begin position="1"/>
        <end position="40"/>
    </location>
</feature>
<feature type="region of interest" description="Disordered" evidence="1">
    <location>
        <begin position="409"/>
        <end position="439"/>
    </location>
</feature>
<feature type="compositionally biased region" description="Polar residues" evidence="1">
    <location>
        <begin position="409"/>
        <end position="419"/>
    </location>
</feature>
<feature type="compositionally biased region" description="Polar residues" evidence="1">
    <location>
        <begin position="429"/>
        <end position="439"/>
    </location>
</feature>
<keyword id="KW-1185">Reference proteome</keyword>
<name>OSB6_DICDI</name>
<dbReference type="EMBL" id="AAFI02000015">
    <property type="protein sequence ID" value="EAL69167.1"/>
    <property type="molecule type" value="Genomic_DNA"/>
</dbReference>
<dbReference type="RefSeq" id="XP_643140.1">
    <property type="nucleotide sequence ID" value="XM_638048.1"/>
</dbReference>
<dbReference type="SMR" id="Q86HV4"/>
<dbReference type="STRING" id="44689.Q86HV4"/>
<dbReference type="PaxDb" id="44689-DDB0237795"/>
<dbReference type="EnsemblProtists" id="EAL69167">
    <property type="protein sequence ID" value="EAL69167"/>
    <property type="gene ID" value="DDB_G0276427"/>
</dbReference>
<dbReference type="GeneID" id="8620546"/>
<dbReference type="KEGG" id="ddi:DDB_G0276427"/>
<dbReference type="dictyBase" id="DDB_G0276427">
    <property type="gene designation" value="osbF"/>
</dbReference>
<dbReference type="VEuPathDB" id="AmoebaDB:DDB_G0276427"/>
<dbReference type="eggNOG" id="KOG2210">
    <property type="taxonomic scope" value="Eukaryota"/>
</dbReference>
<dbReference type="HOGENOM" id="CLU_012334_1_2_1"/>
<dbReference type="InParanoid" id="Q86HV4"/>
<dbReference type="OMA" id="LRWKFEF"/>
<dbReference type="PhylomeDB" id="Q86HV4"/>
<dbReference type="Reactome" id="R-DDI-192105">
    <property type="pathway name" value="Synthesis of bile acids and bile salts"/>
</dbReference>
<dbReference type="PRO" id="PR:Q86HV4"/>
<dbReference type="Proteomes" id="UP000002195">
    <property type="component" value="Chromosome 2"/>
</dbReference>
<dbReference type="GO" id="GO:0005829">
    <property type="term" value="C:cytosol"/>
    <property type="evidence" value="ECO:0000318"/>
    <property type="project" value="GO_Central"/>
</dbReference>
<dbReference type="GO" id="GO:0016020">
    <property type="term" value="C:membrane"/>
    <property type="evidence" value="ECO:0000318"/>
    <property type="project" value="GO_Central"/>
</dbReference>
<dbReference type="GO" id="GO:0032934">
    <property type="term" value="F:sterol binding"/>
    <property type="evidence" value="ECO:0000318"/>
    <property type="project" value="GO_Central"/>
</dbReference>
<dbReference type="FunFam" id="3.30.70.3490:FF:000040">
    <property type="match status" value="1"/>
</dbReference>
<dbReference type="FunFam" id="2.40.160.120:FF:000011">
    <property type="entry name" value="Oxysterol-binding protein-related protein 4C"/>
    <property type="match status" value="1"/>
</dbReference>
<dbReference type="Gene3D" id="2.40.160.120">
    <property type="match status" value="1"/>
</dbReference>
<dbReference type="Gene3D" id="3.30.70.3490">
    <property type="match status" value="1"/>
</dbReference>
<dbReference type="InterPro" id="IPR037239">
    <property type="entry name" value="OSBP_sf"/>
</dbReference>
<dbReference type="InterPro" id="IPR000648">
    <property type="entry name" value="Oxysterol-bd"/>
</dbReference>
<dbReference type="InterPro" id="IPR018494">
    <property type="entry name" value="Oxysterol-bd_CS"/>
</dbReference>
<dbReference type="PANTHER" id="PTHR10972:SF197">
    <property type="entry name" value="OXYSTEROL-BINDING PROTEIN 6"/>
    <property type="match status" value="1"/>
</dbReference>
<dbReference type="PANTHER" id="PTHR10972">
    <property type="entry name" value="OXYSTEROL-BINDING PROTEIN-RELATED"/>
    <property type="match status" value="1"/>
</dbReference>
<dbReference type="Pfam" id="PF01237">
    <property type="entry name" value="Oxysterol_BP"/>
    <property type="match status" value="1"/>
</dbReference>
<dbReference type="SUPFAM" id="SSF144000">
    <property type="entry name" value="Oxysterol-binding protein-like"/>
    <property type="match status" value="1"/>
</dbReference>
<dbReference type="PROSITE" id="PS01013">
    <property type="entry name" value="OSBP"/>
    <property type="match status" value="1"/>
</dbReference>
<organism>
    <name type="scientific">Dictyostelium discoideum</name>
    <name type="common">Social amoeba</name>
    <dbReference type="NCBI Taxonomy" id="44689"/>
    <lineage>
        <taxon>Eukaryota</taxon>
        <taxon>Amoebozoa</taxon>
        <taxon>Evosea</taxon>
        <taxon>Eumycetozoa</taxon>
        <taxon>Dictyostelia</taxon>
        <taxon>Dictyosteliales</taxon>
        <taxon>Dictyosteliaceae</taxon>
        <taxon>Dictyostelium</taxon>
    </lineage>
</organism>
<protein>
    <recommendedName>
        <fullName>Oxysterol-binding protein 6</fullName>
    </recommendedName>
    <alternativeName>
        <fullName>OSBPf</fullName>
    </alternativeName>
</protein>
<comment type="similarity">
    <text evidence="2">Belongs to the OSBP family.</text>
</comment>
<reference key="1">
    <citation type="journal article" date="2002" name="Nature">
        <title>Sequence and analysis of chromosome 2 of Dictyostelium discoideum.</title>
        <authorList>
            <person name="Gloeckner G."/>
            <person name="Eichinger L."/>
            <person name="Szafranski K."/>
            <person name="Pachebat J.A."/>
            <person name="Bankier A.T."/>
            <person name="Dear P.H."/>
            <person name="Lehmann R."/>
            <person name="Baumgart C."/>
            <person name="Parra G."/>
            <person name="Abril J.F."/>
            <person name="Guigo R."/>
            <person name="Kumpf K."/>
            <person name="Tunggal B."/>
            <person name="Cox E.C."/>
            <person name="Quail M.A."/>
            <person name="Platzer M."/>
            <person name="Rosenthal A."/>
            <person name="Noegel A.A."/>
        </authorList>
    </citation>
    <scope>NUCLEOTIDE SEQUENCE [LARGE SCALE GENOMIC DNA]</scope>
    <source>
        <strain>AX4</strain>
    </source>
</reference>
<reference key="2">
    <citation type="journal article" date="2005" name="Nature">
        <title>The genome of the social amoeba Dictyostelium discoideum.</title>
        <authorList>
            <person name="Eichinger L."/>
            <person name="Pachebat J.A."/>
            <person name="Gloeckner G."/>
            <person name="Rajandream M.A."/>
            <person name="Sucgang R."/>
            <person name="Berriman M."/>
            <person name="Song J."/>
            <person name="Olsen R."/>
            <person name="Szafranski K."/>
            <person name="Xu Q."/>
            <person name="Tunggal B."/>
            <person name="Kummerfeld S."/>
            <person name="Madera M."/>
            <person name="Konfortov B.A."/>
            <person name="Rivero F."/>
            <person name="Bankier A.T."/>
            <person name="Lehmann R."/>
            <person name="Hamlin N."/>
            <person name="Davies R."/>
            <person name="Gaudet P."/>
            <person name="Fey P."/>
            <person name="Pilcher K."/>
            <person name="Chen G."/>
            <person name="Saunders D."/>
            <person name="Sodergren E.J."/>
            <person name="Davis P."/>
            <person name="Kerhornou A."/>
            <person name="Nie X."/>
            <person name="Hall N."/>
            <person name="Anjard C."/>
            <person name="Hemphill L."/>
            <person name="Bason N."/>
            <person name="Farbrother P."/>
            <person name="Desany B."/>
            <person name="Just E."/>
            <person name="Morio T."/>
            <person name="Rost R."/>
            <person name="Churcher C.M."/>
            <person name="Cooper J."/>
            <person name="Haydock S."/>
            <person name="van Driessche N."/>
            <person name="Cronin A."/>
            <person name="Goodhead I."/>
            <person name="Muzny D.M."/>
            <person name="Mourier T."/>
            <person name="Pain A."/>
            <person name="Lu M."/>
            <person name="Harper D."/>
            <person name="Lindsay R."/>
            <person name="Hauser H."/>
            <person name="James K.D."/>
            <person name="Quiles M."/>
            <person name="Madan Babu M."/>
            <person name="Saito T."/>
            <person name="Buchrieser C."/>
            <person name="Wardroper A."/>
            <person name="Felder M."/>
            <person name="Thangavelu M."/>
            <person name="Johnson D."/>
            <person name="Knights A."/>
            <person name="Loulseged H."/>
            <person name="Mungall K.L."/>
            <person name="Oliver K."/>
            <person name="Price C."/>
            <person name="Quail M.A."/>
            <person name="Urushihara H."/>
            <person name="Hernandez J."/>
            <person name="Rabbinowitsch E."/>
            <person name="Steffen D."/>
            <person name="Sanders M."/>
            <person name="Ma J."/>
            <person name="Kohara Y."/>
            <person name="Sharp S."/>
            <person name="Simmonds M.N."/>
            <person name="Spiegler S."/>
            <person name="Tivey A."/>
            <person name="Sugano S."/>
            <person name="White B."/>
            <person name="Walker D."/>
            <person name="Woodward J.R."/>
            <person name="Winckler T."/>
            <person name="Tanaka Y."/>
            <person name="Shaulsky G."/>
            <person name="Schleicher M."/>
            <person name="Weinstock G.M."/>
            <person name="Rosenthal A."/>
            <person name="Cox E.C."/>
            <person name="Chisholm R.L."/>
            <person name="Gibbs R.A."/>
            <person name="Loomis W.F."/>
            <person name="Platzer M."/>
            <person name="Kay R.R."/>
            <person name="Williams J.G."/>
            <person name="Dear P.H."/>
            <person name="Noegel A.A."/>
            <person name="Barrell B.G."/>
            <person name="Kuspa A."/>
        </authorList>
    </citation>
    <scope>NUCLEOTIDE SEQUENCE [LARGE SCALE GENOMIC DNA]</scope>
    <source>
        <strain>AX4</strain>
    </source>
</reference>